<dbReference type="EMBL" id="M27318">
    <property type="protein sequence ID" value="AAA52726.1"/>
    <property type="molecule type" value="mRNA"/>
</dbReference>
<dbReference type="EMBL" id="X02955">
    <property type="protein sequence ID" value="CAA26701.1"/>
    <property type="molecule type" value="Genomic_DNA"/>
</dbReference>
<dbReference type="EMBL" id="AL512606">
    <property type="status" value="NOT_ANNOTATED_CDS"/>
    <property type="molecule type" value="Genomic_DNA"/>
</dbReference>
<dbReference type="EMBL" id="CH471071">
    <property type="protein sequence ID" value="EAW58621.1"/>
    <property type="molecule type" value="Genomic_DNA"/>
</dbReference>
<dbReference type="EMBL" id="BC074965">
    <property type="protein sequence ID" value="AAH74965.1"/>
    <property type="molecule type" value="mRNA"/>
</dbReference>
<dbReference type="EMBL" id="BC074966">
    <property type="protein sequence ID" value="AAH74966.1"/>
    <property type="molecule type" value="mRNA"/>
</dbReference>
<dbReference type="EMBL" id="BC113640">
    <property type="protein sequence ID" value="AAI13641.1"/>
    <property type="molecule type" value="mRNA"/>
</dbReference>
<dbReference type="EMBL" id="BC113642">
    <property type="protein sequence ID" value="AAI13643.1"/>
    <property type="molecule type" value="mRNA"/>
</dbReference>
<dbReference type="CCDS" id="CCDS6498.1"/>
<dbReference type="PIR" id="E23753">
    <property type="entry name" value="IVHU4B"/>
</dbReference>
<dbReference type="PIR" id="I52347">
    <property type="entry name" value="I52347"/>
</dbReference>
<dbReference type="RefSeq" id="NP_066546.1">
    <property type="nucleotide sequence ID" value="NM_021068.4"/>
</dbReference>
<dbReference type="SMR" id="P05014"/>
<dbReference type="BioGRID" id="109664">
    <property type="interactions" value="43"/>
</dbReference>
<dbReference type="ComplexPortal" id="CPX-5998">
    <property type="entry name" value="Interferon alpha receptor-ligand complex, IFNA4 variant"/>
</dbReference>
<dbReference type="FunCoup" id="P05014">
    <property type="interactions" value="966"/>
</dbReference>
<dbReference type="IntAct" id="P05014">
    <property type="interactions" value="40"/>
</dbReference>
<dbReference type="STRING" id="9606.ENSP00000412897"/>
<dbReference type="ChEMBL" id="CHEMBL3856161"/>
<dbReference type="iPTMnet" id="P05014"/>
<dbReference type="PhosphoSitePlus" id="P05014"/>
<dbReference type="BioMuta" id="IFNA4"/>
<dbReference type="DMDM" id="84029375"/>
<dbReference type="MassIVE" id="P05014"/>
<dbReference type="PaxDb" id="9606-ENSP00000412897"/>
<dbReference type="PeptideAtlas" id="P05014"/>
<dbReference type="ABCD" id="P05014">
    <property type="antibodies" value="2 sequenced antibodies"/>
</dbReference>
<dbReference type="Antibodypedia" id="24852">
    <property type="antibodies" value="178 antibodies from 21 providers"/>
</dbReference>
<dbReference type="DNASU" id="3441"/>
<dbReference type="Ensembl" id="ENST00000421715.3">
    <property type="protein sequence ID" value="ENSP00000412897.1"/>
    <property type="gene ID" value="ENSG00000236637.5"/>
</dbReference>
<dbReference type="GeneID" id="3441"/>
<dbReference type="KEGG" id="hsa:3441"/>
<dbReference type="MANE-Select" id="ENST00000421715.3">
    <property type="protein sequence ID" value="ENSP00000412897.1"/>
    <property type="RefSeq nucleotide sequence ID" value="NM_021068.4"/>
    <property type="RefSeq protein sequence ID" value="NP_066546.1"/>
</dbReference>
<dbReference type="UCSC" id="uc003zon.3">
    <property type="organism name" value="human"/>
</dbReference>
<dbReference type="AGR" id="HGNC:5425"/>
<dbReference type="CTD" id="3441"/>
<dbReference type="DisGeNET" id="3441"/>
<dbReference type="GeneCards" id="IFNA4"/>
<dbReference type="HGNC" id="HGNC:5425">
    <property type="gene designation" value="IFNA4"/>
</dbReference>
<dbReference type="HPA" id="ENSG00000236637">
    <property type="expression patterns" value="Not detected"/>
</dbReference>
<dbReference type="MIM" id="147564">
    <property type="type" value="gene"/>
</dbReference>
<dbReference type="neXtProt" id="NX_P05014"/>
<dbReference type="OpenTargets" id="ENSG00000236637"/>
<dbReference type="PharmGKB" id="PA29664"/>
<dbReference type="VEuPathDB" id="HostDB:ENSG00000236637"/>
<dbReference type="eggNOG" id="ENOG502SQAC">
    <property type="taxonomic scope" value="Eukaryota"/>
</dbReference>
<dbReference type="GeneTree" id="ENSGT01000000214430"/>
<dbReference type="HOGENOM" id="CLU_109427_0_0_1"/>
<dbReference type="InParanoid" id="P05014"/>
<dbReference type="OMA" id="CFLFITQ"/>
<dbReference type="OrthoDB" id="9526363at2759"/>
<dbReference type="PAN-GO" id="P05014">
    <property type="GO annotations" value="12 GO annotations based on evolutionary models"/>
</dbReference>
<dbReference type="PhylomeDB" id="P05014"/>
<dbReference type="TreeFam" id="TF336177"/>
<dbReference type="PathwayCommons" id="P05014"/>
<dbReference type="Reactome" id="R-HSA-909733">
    <property type="pathway name" value="Interferon alpha/beta signaling"/>
</dbReference>
<dbReference type="Reactome" id="R-HSA-912694">
    <property type="pathway name" value="Regulation of IFNA/IFNB signaling"/>
</dbReference>
<dbReference type="Reactome" id="R-HSA-933541">
    <property type="pathway name" value="TRAF6 mediated IRF7 activation"/>
</dbReference>
<dbReference type="Reactome" id="R-HSA-9705671">
    <property type="pathway name" value="SARS-CoV-2 activates/modulates innate and adaptive immune responses"/>
</dbReference>
<dbReference type="Reactome" id="R-HSA-983231">
    <property type="pathway name" value="Factors involved in megakaryocyte development and platelet production"/>
</dbReference>
<dbReference type="Reactome" id="R-HSA-9833109">
    <property type="pathway name" value="Evasion by RSV of host interferon responses"/>
</dbReference>
<dbReference type="SignaLink" id="P05014"/>
<dbReference type="BioGRID-ORCS" id="3441">
    <property type="hits" value="57 hits in 1029 CRISPR screens"/>
</dbReference>
<dbReference type="GeneWiki" id="IFNA4"/>
<dbReference type="GenomeRNAi" id="3441"/>
<dbReference type="Pharos" id="P05014">
    <property type="development level" value="Tbio"/>
</dbReference>
<dbReference type="PRO" id="PR:P05014"/>
<dbReference type="Proteomes" id="UP000005640">
    <property type="component" value="Chromosome 9"/>
</dbReference>
<dbReference type="RNAct" id="P05014">
    <property type="molecule type" value="protein"/>
</dbReference>
<dbReference type="Bgee" id="ENSG00000236637">
    <property type="expression patterns" value="Expressed in aorta and 2 other cell types or tissues"/>
</dbReference>
<dbReference type="GO" id="GO:0005576">
    <property type="term" value="C:extracellular region"/>
    <property type="evidence" value="ECO:0000304"/>
    <property type="project" value="Reactome"/>
</dbReference>
<dbReference type="GO" id="GO:0005615">
    <property type="term" value="C:extracellular space"/>
    <property type="evidence" value="ECO:0000318"/>
    <property type="project" value="GO_Central"/>
</dbReference>
<dbReference type="GO" id="GO:0005125">
    <property type="term" value="F:cytokine activity"/>
    <property type="evidence" value="ECO:0000318"/>
    <property type="project" value="GO_Central"/>
</dbReference>
<dbReference type="GO" id="GO:0005132">
    <property type="term" value="F:type I interferon receptor binding"/>
    <property type="evidence" value="ECO:0000318"/>
    <property type="project" value="GO_Central"/>
</dbReference>
<dbReference type="GO" id="GO:0002250">
    <property type="term" value="P:adaptive immune response"/>
    <property type="evidence" value="ECO:0000318"/>
    <property type="project" value="GO_Central"/>
</dbReference>
<dbReference type="GO" id="GO:0002312">
    <property type="term" value="P:B cell activation involved in immune response"/>
    <property type="evidence" value="ECO:0000318"/>
    <property type="project" value="GO_Central"/>
</dbReference>
<dbReference type="GO" id="GO:0098586">
    <property type="term" value="P:cellular response to virus"/>
    <property type="evidence" value="ECO:0000303"/>
    <property type="project" value="ComplexPortal"/>
</dbReference>
<dbReference type="GO" id="GO:0051607">
    <property type="term" value="P:defense response to virus"/>
    <property type="evidence" value="ECO:0007669"/>
    <property type="project" value="UniProtKB-KW"/>
</dbReference>
<dbReference type="GO" id="GO:0006959">
    <property type="term" value="P:humoral immune response"/>
    <property type="evidence" value="ECO:0000318"/>
    <property type="project" value="GO_Central"/>
</dbReference>
<dbReference type="GO" id="GO:0002323">
    <property type="term" value="P:natural killer cell activation involved in immune response"/>
    <property type="evidence" value="ECO:0000318"/>
    <property type="project" value="GO_Central"/>
</dbReference>
<dbReference type="GO" id="GO:0043330">
    <property type="term" value="P:response to exogenous dsRNA"/>
    <property type="evidence" value="ECO:0000318"/>
    <property type="project" value="GO_Central"/>
</dbReference>
<dbReference type="GO" id="GO:0009615">
    <property type="term" value="P:response to virus"/>
    <property type="evidence" value="ECO:0000304"/>
    <property type="project" value="ProtInc"/>
</dbReference>
<dbReference type="GO" id="GO:0002286">
    <property type="term" value="P:T cell activation involved in immune response"/>
    <property type="evidence" value="ECO:0000318"/>
    <property type="project" value="GO_Central"/>
</dbReference>
<dbReference type="GO" id="GO:0060337">
    <property type="term" value="P:type I interferon-mediated signaling pathway"/>
    <property type="evidence" value="ECO:0000318"/>
    <property type="project" value="GO_Central"/>
</dbReference>
<dbReference type="CDD" id="cd00095">
    <property type="entry name" value="IFab"/>
    <property type="match status" value="1"/>
</dbReference>
<dbReference type="FunFam" id="1.20.1250.10:FF:000001">
    <property type="entry name" value="Interferon alpha"/>
    <property type="match status" value="1"/>
</dbReference>
<dbReference type="Gene3D" id="1.20.1250.10">
    <property type="match status" value="1"/>
</dbReference>
<dbReference type="InterPro" id="IPR009079">
    <property type="entry name" value="4_helix_cytokine-like_core"/>
</dbReference>
<dbReference type="InterPro" id="IPR000471">
    <property type="entry name" value="Interferon_alpha/beta/delta"/>
</dbReference>
<dbReference type="PANTHER" id="PTHR11691:SF66">
    <property type="entry name" value="INTERFERON ALPHA-10-RELATED"/>
    <property type="match status" value="1"/>
</dbReference>
<dbReference type="PANTHER" id="PTHR11691">
    <property type="entry name" value="TYPE I INTERFERON"/>
    <property type="match status" value="1"/>
</dbReference>
<dbReference type="Pfam" id="PF00143">
    <property type="entry name" value="Interferon"/>
    <property type="match status" value="1"/>
</dbReference>
<dbReference type="PRINTS" id="PR00266">
    <property type="entry name" value="INTERFERONAB"/>
</dbReference>
<dbReference type="SMART" id="SM00076">
    <property type="entry name" value="IFabd"/>
    <property type="match status" value="1"/>
</dbReference>
<dbReference type="SUPFAM" id="SSF47266">
    <property type="entry name" value="4-helical cytokines"/>
    <property type="match status" value="1"/>
</dbReference>
<dbReference type="PROSITE" id="PS00252">
    <property type="entry name" value="INTERFERON_A_B_D"/>
    <property type="match status" value="1"/>
</dbReference>
<keyword id="KW-0051">Antiviral defense</keyword>
<keyword id="KW-0202">Cytokine</keyword>
<keyword id="KW-0903">Direct protein sequencing</keyword>
<keyword id="KW-1015">Disulfide bond</keyword>
<keyword id="KW-1185">Reference proteome</keyword>
<keyword id="KW-0964">Secreted</keyword>
<keyword id="KW-0732">Signal</keyword>
<reference key="1">
    <citation type="journal article" date="1984" name="Biochem. Int.">
        <title>Nucleotide sequence and expression in E. coli of a human interferon-alpha gene selected from a genomic library using synthetic oligonucleotides.</title>
        <authorList>
            <person name="Linnane A.W."/>
            <person name="Beilharz M.W."/>
            <person name="McMullen G.L."/>
            <person name="Macreadie I.G."/>
            <person name="Murphy M."/>
            <person name="Nisbet I.T."/>
            <person name="Novitski C.E."/>
            <person name="Woodrow G.C."/>
        </authorList>
    </citation>
    <scope>NUCLEOTIDE SEQUENCE [MRNA]</scope>
</reference>
<reference key="2">
    <citation type="journal article" date="1985" name="J. Mol. Biol.">
        <title>Structural relationship of human interferon alpha genes and pseudogenes.</title>
        <authorList>
            <person name="Henco K."/>
            <person name="Brosius J."/>
            <person name="Fujisawa A."/>
            <person name="Fujisawa J."/>
            <person name="Haynes J.R."/>
            <person name="Hochstadt J."/>
            <person name="Kovacic T."/>
            <person name="Pasek M."/>
            <person name="Schamboeck A."/>
            <person name="Schmid J."/>
            <person name="Todokoro K."/>
            <person name="Waelchli M."/>
            <person name="Nagata S."/>
            <person name="Weissmann C."/>
        </authorList>
    </citation>
    <scope>NUCLEOTIDE SEQUENCE [GENOMIC DNA]</scope>
    <scope>VARIANTS ALPHA-4B THR-74 AND VAL-137</scope>
</reference>
<reference key="3">
    <citation type="journal article" date="2004" name="Nature">
        <title>DNA sequence and analysis of human chromosome 9.</title>
        <authorList>
            <person name="Humphray S.J."/>
            <person name="Oliver K."/>
            <person name="Hunt A.R."/>
            <person name="Plumb R.W."/>
            <person name="Loveland J.E."/>
            <person name="Howe K.L."/>
            <person name="Andrews T.D."/>
            <person name="Searle S."/>
            <person name="Hunt S.E."/>
            <person name="Scott C.E."/>
            <person name="Jones M.C."/>
            <person name="Ainscough R."/>
            <person name="Almeida J.P."/>
            <person name="Ambrose K.D."/>
            <person name="Ashwell R.I.S."/>
            <person name="Babbage A.K."/>
            <person name="Babbage S."/>
            <person name="Bagguley C.L."/>
            <person name="Bailey J."/>
            <person name="Banerjee R."/>
            <person name="Barker D.J."/>
            <person name="Barlow K.F."/>
            <person name="Bates K."/>
            <person name="Beasley H."/>
            <person name="Beasley O."/>
            <person name="Bird C.P."/>
            <person name="Bray-Allen S."/>
            <person name="Brown A.J."/>
            <person name="Brown J.Y."/>
            <person name="Burford D."/>
            <person name="Burrill W."/>
            <person name="Burton J."/>
            <person name="Carder C."/>
            <person name="Carter N.P."/>
            <person name="Chapman J.C."/>
            <person name="Chen Y."/>
            <person name="Clarke G."/>
            <person name="Clark S.Y."/>
            <person name="Clee C.M."/>
            <person name="Clegg S."/>
            <person name="Collier R.E."/>
            <person name="Corby N."/>
            <person name="Crosier M."/>
            <person name="Cummings A.T."/>
            <person name="Davies J."/>
            <person name="Dhami P."/>
            <person name="Dunn M."/>
            <person name="Dutta I."/>
            <person name="Dyer L.W."/>
            <person name="Earthrowl M.E."/>
            <person name="Faulkner L."/>
            <person name="Fleming C.J."/>
            <person name="Frankish A."/>
            <person name="Frankland J.A."/>
            <person name="French L."/>
            <person name="Fricker D.G."/>
            <person name="Garner P."/>
            <person name="Garnett J."/>
            <person name="Ghori J."/>
            <person name="Gilbert J.G.R."/>
            <person name="Glison C."/>
            <person name="Grafham D.V."/>
            <person name="Gribble S."/>
            <person name="Griffiths C."/>
            <person name="Griffiths-Jones S."/>
            <person name="Grocock R."/>
            <person name="Guy J."/>
            <person name="Hall R.E."/>
            <person name="Hammond S."/>
            <person name="Harley J.L."/>
            <person name="Harrison E.S.I."/>
            <person name="Hart E.A."/>
            <person name="Heath P.D."/>
            <person name="Henderson C.D."/>
            <person name="Hopkins B.L."/>
            <person name="Howard P.J."/>
            <person name="Howden P.J."/>
            <person name="Huckle E."/>
            <person name="Johnson C."/>
            <person name="Johnson D."/>
            <person name="Joy A.A."/>
            <person name="Kay M."/>
            <person name="Keenan S."/>
            <person name="Kershaw J.K."/>
            <person name="Kimberley A.M."/>
            <person name="King A."/>
            <person name="Knights A."/>
            <person name="Laird G.K."/>
            <person name="Langford C."/>
            <person name="Lawlor S."/>
            <person name="Leongamornlert D.A."/>
            <person name="Leversha M."/>
            <person name="Lloyd C."/>
            <person name="Lloyd D.M."/>
            <person name="Lovell J."/>
            <person name="Martin S."/>
            <person name="Mashreghi-Mohammadi M."/>
            <person name="Matthews L."/>
            <person name="McLaren S."/>
            <person name="McLay K.E."/>
            <person name="McMurray A."/>
            <person name="Milne S."/>
            <person name="Nickerson T."/>
            <person name="Nisbett J."/>
            <person name="Nordsiek G."/>
            <person name="Pearce A.V."/>
            <person name="Peck A.I."/>
            <person name="Porter K.M."/>
            <person name="Pandian R."/>
            <person name="Pelan S."/>
            <person name="Phillimore B."/>
            <person name="Povey S."/>
            <person name="Ramsey Y."/>
            <person name="Rand V."/>
            <person name="Scharfe M."/>
            <person name="Sehra H.K."/>
            <person name="Shownkeen R."/>
            <person name="Sims S.K."/>
            <person name="Skuce C.D."/>
            <person name="Smith M."/>
            <person name="Steward C.A."/>
            <person name="Swarbreck D."/>
            <person name="Sycamore N."/>
            <person name="Tester J."/>
            <person name="Thorpe A."/>
            <person name="Tracey A."/>
            <person name="Tromans A."/>
            <person name="Thomas D.W."/>
            <person name="Wall M."/>
            <person name="Wallis J.M."/>
            <person name="West A.P."/>
            <person name="Whitehead S.L."/>
            <person name="Willey D.L."/>
            <person name="Williams S.A."/>
            <person name="Wilming L."/>
            <person name="Wray P.W."/>
            <person name="Young L."/>
            <person name="Ashurst J.L."/>
            <person name="Coulson A."/>
            <person name="Blocker H."/>
            <person name="Durbin R.M."/>
            <person name="Sulston J.E."/>
            <person name="Hubbard T."/>
            <person name="Jackson M.J."/>
            <person name="Bentley D.R."/>
            <person name="Beck S."/>
            <person name="Rogers J."/>
            <person name="Dunham I."/>
        </authorList>
    </citation>
    <scope>NUCLEOTIDE SEQUENCE [LARGE SCALE GENOMIC DNA]</scope>
</reference>
<reference key="4">
    <citation type="submission" date="2005-09" db="EMBL/GenBank/DDBJ databases">
        <authorList>
            <person name="Mural R.J."/>
            <person name="Istrail S."/>
            <person name="Sutton G.G."/>
            <person name="Florea L."/>
            <person name="Halpern A.L."/>
            <person name="Mobarry C.M."/>
            <person name="Lippert R."/>
            <person name="Walenz B."/>
            <person name="Shatkay H."/>
            <person name="Dew I."/>
            <person name="Miller J.R."/>
            <person name="Flanigan M.J."/>
            <person name="Edwards N.J."/>
            <person name="Bolanos R."/>
            <person name="Fasulo D."/>
            <person name="Halldorsson B.V."/>
            <person name="Hannenhalli S."/>
            <person name="Turner R."/>
            <person name="Yooseph S."/>
            <person name="Lu F."/>
            <person name="Nusskern D.R."/>
            <person name="Shue B.C."/>
            <person name="Zheng X.H."/>
            <person name="Zhong F."/>
            <person name="Delcher A.L."/>
            <person name="Huson D.H."/>
            <person name="Kravitz S.A."/>
            <person name="Mouchard L."/>
            <person name="Reinert K."/>
            <person name="Remington K.A."/>
            <person name="Clark A.G."/>
            <person name="Waterman M.S."/>
            <person name="Eichler E.E."/>
            <person name="Adams M.D."/>
            <person name="Hunkapiller M.W."/>
            <person name="Myers E.W."/>
            <person name="Venter J.C."/>
        </authorList>
    </citation>
    <scope>NUCLEOTIDE SEQUENCE [LARGE SCALE GENOMIC DNA]</scope>
    <scope>VARIANT THR-74</scope>
</reference>
<reference key="5">
    <citation type="journal article" date="2004" name="Genome Res.">
        <title>The status, quality, and expansion of the NIH full-length cDNA project: the Mammalian Gene Collection (MGC).</title>
        <authorList>
            <consortium name="The MGC Project Team"/>
        </authorList>
    </citation>
    <scope>NUCLEOTIDE SEQUENCE [LARGE SCALE MRNA]</scope>
    <scope>VARIANT THR-74</scope>
    <source>
        <tissue>Brain</tissue>
    </source>
</reference>
<reference key="6">
    <citation type="journal article" date="1998" name="Biochem. J.">
        <title>Identification of nine interferon-alpha subtypes produced by Sendai virus-induced human peripheral blood leucocytes.</title>
        <authorList>
            <person name="Nyman T.A."/>
            <person name="Toeloe H."/>
            <person name="Parkkinen J."/>
            <person name="Kalkkinen N."/>
        </authorList>
    </citation>
    <scope>PROTEIN SEQUENCE OF 24-56</scope>
</reference>
<reference key="7">
    <citation type="journal article" date="1997" name="J. Interferon Cytokine Res.">
        <title>Both variant forms of interferon-alpha4 gene (IFNA4a and IFNA4b) are present in the human population.</title>
        <authorList>
            <person name="Hussain M."/>
            <person name="Gill D.S."/>
            <person name="Liao M.-J."/>
        </authorList>
    </citation>
    <scope>POLYMORPHISM</scope>
</reference>
<evidence type="ECO:0000250" key="1"/>
<evidence type="ECO:0000269" key="2">
    <source>
    </source>
</evidence>
<evidence type="ECO:0000269" key="3">
    <source>
    </source>
</evidence>
<evidence type="ECO:0000269" key="4">
    <source>
    </source>
</evidence>
<evidence type="ECO:0000269" key="5">
    <source>
    </source>
</evidence>
<evidence type="ECO:0000269" key="6">
    <source ref="4"/>
</evidence>
<evidence type="ECO:0000305" key="7"/>
<accession>P05014</accession>
<accession>P13358</accession>
<accession>Q14CS4</accession>
<accession>Q5VV15</accession>
<organism>
    <name type="scientific">Homo sapiens</name>
    <name type="common">Human</name>
    <dbReference type="NCBI Taxonomy" id="9606"/>
    <lineage>
        <taxon>Eukaryota</taxon>
        <taxon>Metazoa</taxon>
        <taxon>Chordata</taxon>
        <taxon>Craniata</taxon>
        <taxon>Vertebrata</taxon>
        <taxon>Euteleostomi</taxon>
        <taxon>Mammalia</taxon>
        <taxon>Eutheria</taxon>
        <taxon>Euarchontoglires</taxon>
        <taxon>Primates</taxon>
        <taxon>Haplorrhini</taxon>
        <taxon>Catarrhini</taxon>
        <taxon>Hominidae</taxon>
        <taxon>Homo</taxon>
    </lineage>
</organism>
<sequence>MALSFSLLMAVLVLSYKSICSLGCDLPQTHSLGNRRALILLAQMGRISHFSCLKDRHDFGFPEEEFDGHQFQKAQAISVLHEMIQQTFNLFSTEDSSAAWEQSLLEKFSTELYQQLNDLEACVIQEVGVEETPLMNEDSILAVRKYFQRITLYLTEKKYSPCAWEVVRAEIMRSLSFSTNLQKRLRRKD</sequence>
<protein>
    <recommendedName>
        <fullName>Interferon alpha-4</fullName>
        <shortName>IFN-alpha-4</shortName>
    </recommendedName>
    <alternativeName>
        <fullName>Interferon alpha-4B</fullName>
    </alternativeName>
    <alternativeName>
        <fullName>Interferon alpha-76</fullName>
    </alternativeName>
    <alternativeName>
        <fullName>Interferon alpha-M1</fullName>
    </alternativeName>
</protein>
<feature type="signal peptide" evidence="5">
    <location>
        <begin position="1"/>
        <end position="23"/>
    </location>
</feature>
<feature type="chain" id="PRO_0000016361" description="Interferon alpha-4">
    <location>
        <begin position="24"/>
        <end position="189"/>
    </location>
</feature>
<feature type="disulfide bond" evidence="1">
    <location>
        <begin position="24"/>
        <end position="122"/>
    </location>
</feature>
<feature type="disulfide bond" evidence="1">
    <location>
        <begin position="52"/>
        <end position="162"/>
    </location>
</feature>
<feature type="sequence variant" id="VAR_034010" description="In dbSNP:rs201964250.">
    <original>H</original>
    <variation>P</variation>
    <location>
        <position position="49"/>
    </location>
</feature>
<feature type="sequence variant" id="VAR_013002" description="In alpha-4B; dbSNP:rs1062571." evidence="2 3 6">
    <original>A</original>
    <variation>T</variation>
    <location>
        <position position="74"/>
    </location>
</feature>
<feature type="sequence variant" id="VAR_013003" description="In alpha-4B; dbSNP:rs3750480." evidence="3">
    <original>E</original>
    <variation>V</variation>
    <location>
        <position position="137"/>
    </location>
</feature>
<name>IFNA4_HUMAN</name>
<proteinExistence type="evidence at protein level"/>
<comment type="function">
    <text>Produced by macrophages, IFN-alpha have antiviral activities. Interferon stimulates the production of two enzymes: a protein kinase and an oligoadenylate synthetase.</text>
</comment>
<comment type="interaction">
    <interactant intactId="EBI-10194381">
        <id>P05014</id>
    </interactant>
    <interactant intactId="EBI-10194102">
        <id>P04075-2</id>
        <label>ALDOA</label>
    </interactant>
    <organismsDiffer>false</organismsDiffer>
    <experiments>3</experiments>
</comment>
<comment type="interaction">
    <interactant intactId="EBI-10194381">
        <id>P05014</id>
    </interactant>
    <interactant intactId="EBI-704146">
        <id>P19429</id>
        <label>TNNI3</label>
    </interactant>
    <organismsDiffer>false</organismsDiffer>
    <experiments>2</experiments>
</comment>
<comment type="subcellular location">
    <subcellularLocation>
        <location>Secreted</location>
    </subcellularLocation>
</comment>
<comment type="polymorphism">
    <text evidence="4">Two forms exist; alpha-4a (shown here) and alpha-4b (PubMed:9335434). They seem to be equally abundant (PubMed:9335434).</text>
</comment>
<comment type="similarity">
    <text evidence="7">Belongs to the alpha/beta interferon family.</text>
</comment>
<gene>
    <name type="primary">IFNA4</name>
</gene>